<comment type="function">
    <text evidence="1">Negative regulator of class I heat shock genes (grpE-dnaK-dnaJ and groELS operons). Prevents heat-shock induction of these operons.</text>
</comment>
<comment type="similarity">
    <text evidence="1">Belongs to the HrcA family.</text>
</comment>
<feature type="chain" id="PRO_1000092807" description="Heat-inducible transcription repressor HrcA">
    <location>
        <begin position="1"/>
        <end position="343"/>
    </location>
</feature>
<proteinExistence type="inferred from homology"/>
<dbReference type="EMBL" id="CP001056">
    <property type="protein sequence ID" value="ACD24943.1"/>
    <property type="molecule type" value="Genomic_DNA"/>
</dbReference>
<dbReference type="SMR" id="B2TLZ5"/>
<dbReference type="KEGG" id="cbk:CLL_A0889"/>
<dbReference type="HOGENOM" id="CLU_050019_1_0_9"/>
<dbReference type="Proteomes" id="UP000001195">
    <property type="component" value="Chromosome"/>
</dbReference>
<dbReference type="GO" id="GO:0003677">
    <property type="term" value="F:DNA binding"/>
    <property type="evidence" value="ECO:0007669"/>
    <property type="project" value="InterPro"/>
</dbReference>
<dbReference type="GO" id="GO:0045892">
    <property type="term" value="P:negative regulation of DNA-templated transcription"/>
    <property type="evidence" value="ECO:0007669"/>
    <property type="project" value="UniProtKB-UniRule"/>
</dbReference>
<dbReference type="FunFam" id="1.10.10.10:FF:000049">
    <property type="entry name" value="Heat-inducible transcription repressor HrcA"/>
    <property type="match status" value="1"/>
</dbReference>
<dbReference type="Gene3D" id="3.30.450.40">
    <property type="match status" value="1"/>
</dbReference>
<dbReference type="Gene3D" id="3.30.390.60">
    <property type="entry name" value="Heat-inducible transcription repressor hrca homolog, domain 3"/>
    <property type="match status" value="1"/>
</dbReference>
<dbReference type="Gene3D" id="1.10.10.10">
    <property type="entry name" value="Winged helix-like DNA-binding domain superfamily/Winged helix DNA-binding domain"/>
    <property type="match status" value="1"/>
</dbReference>
<dbReference type="HAMAP" id="MF_00081">
    <property type="entry name" value="HrcA"/>
    <property type="match status" value="1"/>
</dbReference>
<dbReference type="InterPro" id="IPR029016">
    <property type="entry name" value="GAF-like_dom_sf"/>
</dbReference>
<dbReference type="InterPro" id="IPR002571">
    <property type="entry name" value="HrcA"/>
</dbReference>
<dbReference type="InterPro" id="IPR021153">
    <property type="entry name" value="HrcA_C"/>
</dbReference>
<dbReference type="InterPro" id="IPR036388">
    <property type="entry name" value="WH-like_DNA-bd_sf"/>
</dbReference>
<dbReference type="InterPro" id="IPR036390">
    <property type="entry name" value="WH_DNA-bd_sf"/>
</dbReference>
<dbReference type="InterPro" id="IPR023120">
    <property type="entry name" value="WHTH_transcript_rep_HrcA_IDD"/>
</dbReference>
<dbReference type="NCBIfam" id="TIGR00331">
    <property type="entry name" value="hrcA"/>
    <property type="match status" value="1"/>
</dbReference>
<dbReference type="PANTHER" id="PTHR34824">
    <property type="entry name" value="HEAT-INDUCIBLE TRANSCRIPTION REPRESSOR HRCA"/>
    <property type="match status" value="1"/>
</dbReference>
<dbReference type="PANTHER" id="PTHR34824:SF1">
    <property type="entry name" value="HEAT-INDUCIBLE TRANSCRIPTION REPRESSOR HRCA"/>
    <property type="match status" value="1"/>
</dbReference>
<dbReference type="Pfam" id="PF01628">
    <property type="entry name" value="HrcA"/>
    <property type="match status" value="1"/>
</dbReference>
<dbReference type="PIRSF" id="PIRSF005485">
    <property type="entry name" value="HrcA"/>
    <property type="match status" value="1"/>
</dbReference>
<dbReference type="SUPFAM" id="SSF55781">
    <property type="entry name" value="GAF domain-like"/>
    <property type="match status" value="1"/>
</dbReference>
<dbReference type="SUPFAM" id="SSF46785">
    <property type="entry name" value="Winged helix' DNA-binding domain"/>
    <property type="match status" value="1"/>
</dbReference>
<protein>
    <recommendedName>
        <fullName evidence="1">Heat-inducible transcription repressor HrcA</fullName>
    </recommendedName>
</protein>
<reference key="1">
    <citation type="submission" date="2008-04" db="EMBL/GenBank/DDBJ databases">
        <title>Complete sequence of Clostridium botulinum strain Eklund.</title>
        <authorList>
            <person name="Brinkac L.M."/>
            <person name="Brown J.L."/>
            <person name="Bruce D."/>
            <person name="Detter C."/>
            <person name="Munk C."/>
            <person name="Smith L.A."/>
            <person name="Smith T.J."/>
            <person name="Sutton G."/>
            <person name="Brettin T.S."/>
        </authorList>
    </citation>
    <scope>NUCLEOTIDE SEQUENCE [LARGE SCALE GENOMIC DNA]</scope>
    <source>
        <strain>Eklund 17B / Type B</strain>
    </source>
</reference>
<name>HRCA_CLOBB</name>
<sequence>MTIDDRKIKILQAIINDYIHTGDPVGSRTIAKKYNLGVGSATIRNEMADLEDMGYLEQPHASSGRVPSNKGYRLYVDSLMENQLLTPEENLKIKQYIIDTAMLEVDKIVRQTSSLLSELTNLTCVIQTPSVNKSFIKSLQLMKVDSTTLVSVIITDAGVMKNHIIRVNSTPTIEELNKINAVINRRLVNLCIEQINLQVINQLKEDLQGYDELFNALLTPLYETLKNAADSPDLIMEGATNIFNYPEYNDIEKAKEMLSLLNDKESLRDLLKTNKDITIRIGEENYKPQAKECSIIAAEYSFGNRPIGTIGLIGPKRIDYSKVISIMAEIVKELNNILNNQSK</sequence>
<accession>B2TLZ5</accession>
<gene>
    <name evidence="1" type="primary">hrcA</name>
    <name type="ordered locus">CLL_A0889</name>
</gene>
<evidence type="ECO:0000255" key="1">
    <source>
        <dbReference type="HAMAP-Rule" id="MF_00081"/>
    </source>
</evidence>
<keyword id="KW-0678">Repressor</keyword>
<keyword id="KW-0346">Stress response</keyword>
<keyword id="KW-0804">Transcription</keyword>
<keyword id="KW-0805">Transcription regulation</keyword>
<organism>
    <name type="scientific">Clostridium botulinum (strain Eklund 17B / Type B)</name>
    <dbReference type="NCBI Taxonomy" id="935198"/>
    <lineage>
        <taxon>Bacteria</taxon>
        <taxon>Bacillati</taxon>
        <taxon>Bacillota</taxon>
        <taxon>Clostridia</taxon>
        <taxon>Eubacteriales</taxon>
        <taxon>Clostridiaceae</taxon>
        <taxon>Clostridium</taxon>
    </lineage>
</organism>